<proteinExistence type="inferred from homology"/>
<evidence type="ECO:0000255" key="1">
    <source>
        <dbReference type="HAMAP-Rule" id="MF_00456"/>
    </source>
</evidence>
<keyword id="KW-0028">Amino-acid biosynthesis</keyword>
<keyword id="KW-0067">ATP-binding</keyword>
<keyword id="KW-0963">Cytoplasm</keyword>
<keyword id="KW-0418">Kinase</keyword>
<keyword id="KW-0547">Nucleotide-binding</keyword>
<keyword id="KW-0641">Proline biosynthesis</keyword>
<keyword id="KW-1185">Reference proteome</keyword>
<keyword id="KW-0808">Transferase</keyword>
<sequence>MKAKRIVFKVGTSSLTNADGSLSRAKVKEITRQLALLHEAGHELILVSSGAIAAGFSSLGFKKRPTKVVDKQASAAVGQGLLLEEYTTNLLLKQIISAQILLTQDDFADKRRYKNAHQALSVLLNRGAIPVINENDSVAIEELKVGDNDTLSAQVAAMVQADLLVLLTDVDGLYTANPSTNPDARRLEKIEKISSELIDIAGGAGTSNGTGGMLTKIKAATLATMSGVPVYICSSLKTDALLEAAEETKDGSLFLAQEKGLKTQKQWLAFYAKSQGEIYVDQGAADALRNKGKSLLVSGLVSVSGSFAYQDTVTVYEEGSGAILGKGRVRFGELALKDMLKSNKPKGVVIHRDDWISLTPELNDLFAEF</sequence>
<name>PROB_STRGC</name>
<reference key="1">
    <citation type="journal article" date="2007" name="J. Bacteriol.">
        <title>Genome-wide transcriptional changes in Streptococcus gordonii in response to competence signaling peptide.</title>
        <authorList>
            <person name="Vickerman M.M."/>
            <person name="Iobst S."/>
            <person name="Jesionowski A.M."/>
            <person name="Gill S.R."/>
        </authorList>
    </citation>
    <scope>NUCLEOTIDE SEQUENCE [LARGE SCALE GENOMIC DNA]</scope>
    <source>
        <strain>Challis / ATCC 35105 / BCRC 15272 / CH1 / DL1 / V288</strain>
    </source>
</reference>
<gene>
    <name evidence="1" type="primary">proB</name>
    <name type="ordered locus">SGO_1097</name>
</gene>
<dbReference type="EC" id="2.7.2.11" evidence="1"/>
<dbReference type="EMBL" id="CP000725">
    <property type="protein sequence ID" value="ABV10021.1"/>
    <property type="molecule type" value="Genomic_DNA"/>
</dbReference>
<dbReference type="RefSeq" id="WP_012000508.1">
    <property type="nucleotide sequence ID" value="NC_009785.1"/>
</dbReference>
<dbReference type="SMR" id="A8AX76"/>
<dbReference type="STRING" id="467705.SGO_1097"/>
<dbReference type="KEGG" id="sgo:SGO_1097"/>
<dbReference type="eggNOG" id="COG0263">
    <property type="taxonomic scope" value="Bacteria"/>
</dbReference>
<dbReference type="HOGENOM" id="CLU_025400_2_0_9"/>
<dbReference type="UniPathway" id="UPA00098">
    <property type="reaction ID" value="UER00359"/>
</dbReference>
<dbReference type="Proteomes" id="UP000001131">
    <property type="component" value="Chromosome"/>
</dbReference>
<dbReference type="GO" id="GO:0005829">
    <property type="term" value="C:cytosol"/>
    <property type="evidence" value="ECO:0007669"/>
    <property type="project" value="TreeGrafter"/>
</dbReference>
<dbReference type="GO" id="GO:0005524">
    <property type="term" value="F:ATP binding"/>
    <property type="evidence" value="ECO:0007669"/>
    <property type="project" value="UniProtKB-KW"/>
</dbReference>
<dbReference type="GO" id="GO:0004349">
    <property type="term" value="F:glutamate 5-kinase activity"/>
    <property type="evidence" value="ECO:0007669"/>
    <property type="project" value="UniProtKB-UniRule"/>
</dbReference>
<dbReference type="GO" id="GO:0003723">
    <property type="term" value="F:RNA binding"/>
    <property type="evidence" value="ECO:0007669"/>
    <property type="project" value="InterPro"/>
</dbReference>
<dbReference type="GO" id="GO:0055129">
    <property type="term" value="P:L-proline biosynthetic process"/>
    <property type="evidence" value="ECO:0007669"/>
    <property type="project" value="UniProtKB-UniRule"/>
</dbReference>
<dbReference type="CDD" id="cd04242">
    <property type="entry name" value="AAK_G5K_ProB"/>
    <property type="match status" value="1"/>
</dbReference>
<dbReference type="CDD" id="cd21157">
    <property type="entry name" value="PUA_G5K"/>
    <property type="match status" value="1"/>
</dbReference>
<dbReference type="FunFam" id="3.40.1160.10:FF:000018">
    <property type="entry name" value="Glutamate 5-kinase"/>
    <property type="match status" value="1"/>
</dbReference>
<dbReference type="Gene3D" id="3.40.1160.10">
    <property type="entry name" value="Acetylglutamate kinase-like"/>
    <property type="match status" value="1"/>
</dbReference>
<dbReference type="Gene3D" id="2.30.130.10">
    <property type="entry name" value="PUA domain"/>
    <property type="match status" value="1"/>
</dbReference>
<dbReference type="HAMAP" id="MF_00456">
    <property type="entry name" value="ProB"/>
    <property type="match status" value="1"/>
</dbReference>
<dbReference type="InterPro" id="IPR036393">
    <property type="entry name" value="AceGlu_kinase-like_sf"/>
</dbReference>
<dbReference type="InterPro" id="IPR001048">
    <property type="entry name" value="Asp/Glu/Uridylate_kinase"/>
</dbReference>
<dbReference type="InterPro" id="IPR041739">
    <property type="entry name" value="G5K_ProB"/>
</dbReference>
<dbReference type="InterPro" id="IPR001057">
    <property type="entry name" value="Glu/AcGlu_kinase"/>
</dbReference>
<dbReference type="InterPro" id="IPR011529">
    <property type="entry name" value="Glu_5kinase"/>
</dbReference>
<dbReference type="InterPro" id="IPR005715">
    <property type="entry name" value="Glu_5kinase/COase_Synthase"/>
</dbReference>
<dbReference type="InterPro" id="IPR019797">
    <property type="entry name" value="Glutamate_5-kinase_CS"/>
</dbReference>
<dbReference type="InterPro" id="IPR002478">
    <property type="entry name" value="PUA"/>
</dbReference>
<dbReference type="InterPro" id="IPR015947">
    <property type="entry name" value="PUA-like_sf"/>
</dbReference>
<dbReference type="InterPro" id="IPR036974">
    <property type="entry name" value="PUA_sf"/>
</dbReference>
<dbReference type="NCBIfam" id="TIGR01027">
    <property type="entry name" value="proB"/>
    <property type="match status" value="1"/>
</dbReference>
<dbReference type="PANTHER" id="PTHR43654">
    <property type="entry name" value="GLUTAMATE 5-KINASE"/>
    <property type="match status" value="1"/>
</dbReference>
<dbReference type="PANTHER" id="PTHR43654:SF1">
    <property type="entry name" value="ISOPENTENYL PHOSPHATE KINASE"/>
    <property type="match status" value="1"/>
</dbReference>
<dbReference type="Pfam" id="PF00696">
    <property type="entry name" value="AA_kinase"/>
    <property type="match status" value="1"/>
</dbReference>
<dbReference type="Pfam" id="PF01472">
    <property type="entry name" value="PUA"/>
    <property type="match status" value="1"/>
</dbReference>
<dbReference type="PIRSF" id="PIRSF000729">
    <property type="entry name" value="GK"/>
    <property type="match status" value="1"/>
</dbReference>
<dbReference type="PRINTS" id="PR00474">
    <property type="entry name" value="GLU5KINASE"/>
</dbReference>
<dbReference type="SMART" id="SM00359">
    <property type="entry name" value="PUA"/>
    <property type="match status" value="1"/>
</dbReference>
<dbReference type="SUPFAM" id="SSF53633">
    <property type="entry name" value="Carbamate kinase-like"/>
    <property type="match status" value="1"/>
</dbReference>
<dbReference type="SUPFAM" id="SSF88697">
    <property type="entry name" value="PUA domain-like"/>
    <property type="match status" value="1"/>
</dbReference>
<dbReference type="PROSITE" id="PS00902">
    <property type="entry name" value="GLUTAMATE_5_KINASE"/>
    <property type="match status" value="1"/>
</dbReference>
<dbReference type="PROSITE" id="PS50890">
    <property type="entry name" value="PUA"/>
    <property type="match status" value="1"/>
</dbReference>
<protein>
    <recommendedName>
        <fullName evidence="1">Glutamate 5-kinase</fullName>
        <ecNumber evidence="1">2.7.2.11</ecNumber>
    </recommendedName>
    <alternativeName>
        <fullName evidence="1">Gamma-glutamyl kinase</fullName>
        <shortName evidence="1">GK</shortName>
    </alternativeName>
</protein>
<organism>
    <name type="scientific">Streptococcus gordonii (strain Challis / ATCC 35105 / BCRC 15272 / CH1 / DL1 / V288)</name>
    <dbReference type="NCBI Taxonomy" id="467705"/>
    <lineage>
        <taxon>Bacteria</taxon>
        <taxon>Bacillati</taxon>
        <taxon>Bacillota</taxon>
        <taxon>Bacilli</taxon>
        <taxon>Lactobacillales</taxon>
        <taxon>Streptococcaceae</taxon>
        <taxon>Streptococcus</taxon>
    </lineage>
</organism>
<accession>A8AX76</accession>
<comment type="function">
    <text evidence="1">Catalyzes the transfer of a phosphate group to glutamate to form L-glutamate 5-phosphate.</text>
</comment>
<comment type="catalytic activity">
    <reaction evidence="1">
        <text>L-glutamate + ATP = L-glutamyl 5-phosphate + ADP</text>
        <dbReference type="Rhea" id="RHEA:14877"/>
        <dbReference type="ChEBI" id="CHEBI:29985"/>
        <dbReference type="ChEBI" id="CHEBI:30616"/>
        <dbReference type="ChEBI" id="CHEBI:58274"/>
        <dbReference type="ChEBI" id="CHEBI:456216"/>
        <dbReference type="EC" id="2.7.2.11"/>
    </reaction>
</comment>
<comment type="pathway">
    <text evidence="1">Amino-acid biosynthesis; L-proline biosynthesis; L-glutamate 5-semialdehyde from L-glutamate: step 1/2.</text>
</comment>
<comment type="subcellular location">
    <subcellularLocation>
        <location evidence="1">Cytoplasm</location>
    </subcellularLocation>
</comment>
<comment type="similarity">
    <text evidence="1">Belongs to the glutamate 5-kinase family.</text>
</comment>
<feature type="chain" id="PRO_1000081110" description="Glutamate 5-kinase">
    <location>
        <begin position="1"/>
        <end position="369"/>
    </location>
</feature>
<feature type="domain" description="PUA" evidence="1">
    <location>
        <begin position="275"/>
        <end position="355"/>
    </location>
</feature>
<feature type="binding site" evidence="1">
    <location>
        <position position="9"/>
    </location>
    <ligand>
        <name>ATP</name>
        <dbReference type="ChEBI" id="CHEBI:30616"/>
    </ligand>
</feature>
<feature type="binding site" evidence="1">
    <location>
        <position position="49"/>
    </location>
    <ligand>
        <name>substrate</name>
    </ligand>
</feature>
<feature type="binding site" evidence="1">
    <location>
        <position position="136"/>
    </location>
    <ligand>
        <name>substrate</name>
    </ligand>
</feature>
<feature type="binding site" evidence="1">
    <location>
        <position position="148"/>
    </location>
    <ligand>
        <name>substrate</name>
    </ligand>
</feature>
<feature type="binding site" evidence="1">
    <location>
        <begin position="168"/>
        <end position="169"/>
    </location>
    <ligand>
        <name>ATP</name>
        <dbReference type="ChEBI" id="CHEBI:30616"/>
    </ligand>
</feature>
<feature type="binding site" evidence="1">
    <location>
        <begin position="210"/>
        <end position="216"/>
    </location>
    <ligand>
        <name>ATP</name>
        <dbReference type="ChEBI" id="CHEBI:30616"/>
    </ligand>
</feature>